<evidence type="ECO:0000250" key="1"/>
<evidence type="ECO:0000250" key="2">
    <source>
        <dbReference type="UniProtKB" id="P01112"/>
    </source>
</evidence>
<evidence type="ECO:0000256" key="3">
    <source>
        <dbReference type="SAM" id="MobiDB-lite"/>
    </source>
</evidence>
<evidence type="ECO:0000305" key="4"/>
<accession>P28775</accession>
<keyword id="KW-1003">Cell membrane</keyword>
<keyword id="KW-0342">GTP-binding</keyword>
<keyword id="KW-0378">Hydrolase</keyword>
<keyword id="KW-0449">Lipoprotein</keyword>
<keyword id="KW-0472">Membrane</keyword>
<keyword id="KW-0488">Methylation</keyword>
<keyword id="KW-0547">Nucleotide-binding</keyword>
<keyword id="KW-0564">Palmitate</keyword>
<keyword id="KW-0636">Prenylation</keyword>
<proteinExistence type="inferred from homology"/>
<protein>
    <recommendedName>
        <fullName>Ras-like protein</fullName>
        <ecNumber evidence="2">3.6.5.2</ecNumber>
    </recommendedName>
</protein>
<name>RAS_LENED</name>
<feature type="chain" id="PRO_0000082677" description="Ras-like protein">
    <location>
        <begin position="1"/>
        <end position="214"/>
    </location>
</feature>
<feature type="propeptide" id="PRO_0000281332" description="Removed in mature form" evidence="1">
    <location>
        <begin position="215"/>
        <end position="217"/>
    </location>
</feature>
<feature type="region of interest" description="Disordered" evidence="3">
    <location>
        <begin position="181"/>
        <end position="200"/>
    </location>
</feature>
<feature type="short sequence motif" description="Effector region">
    <location>
        <begin position="39"/>
        <end position="47"/>
    </location>
</feature>
<feature type="compositionally biased region" description="Gly residues" evidence="3">
    <location>
        <begin position="185"/>
        <end position="194"/>
    </location>
</feature>
<feature type="binding site" evidence="1">
    <location>
        <begin position="17"/>
        <end position="24"/>
    </location>
    <ligand>
        <name>GTP</name>
        <dbReference type="ChEBI" id="CHEBI:37565"/>
    </ligand>
</feature>
<feature type="binding site" evidence="1">
    <location>
        <begin position="64"/>
        <end position="68"/>
    </location>
    <ligand>
        <name>GTP</name>
        <dbReference type="ChEBI" id="CHEBI:37565"/>
    </ligand>
</feature>
<feature type="binding site" evidence="1">
    <location>
        <begin position="123"/>
        <end position="126"/>
    </location>
    <ligand>
        <name>GTP</name>
        <dbReference type="ChEBI" id="CHEBI:37565"/>
    </ligand>
</feature>
<feature type="modified residue" description="Cysteine methyl ester" evidence="1">
    <location>
        <position position="214"/>
    </location>
</feature>
<feature type="lipid moiety-binding region" description="S-palmitoyl cysteine" evidence="1">
    <location>
        <position position="210"/>
    </location>
</feature>
<feature type="lipid moiety-binding region" description="S-palmitoyl cysteine" evidence="1">
    <location>
        <position position="211"/>
    </location>
</feature>
<feature type="lipid moiety-binding region" description="S-geranylgeranyl cysteine" evidence="1">
    <location>
        <position position="214"/>
    </location>
</feature>
<comment type="catalytic activity">
    <reaction evidence="2">
        <text>GTP + H2O = GDP + phosphate + H(+)</text>
        <dbReference type="Rhea" id="RHEA:19669"/>
        <dbReference type="ChEBI" id="CHEBI:15377"/>
        <dbReference type="ChEBI" id="CHEBI:15378"/>
        <dbReference type="ChEBI" id="CHEBI:37565"/>
        <dbReference type="ChEBI" id="CHEBI:43474"/>
        <dbReference type="ChEBI" id="CHEBI:58189"/>
        <dbReference type="EC" id="3.6.5.2"/>
    </reaction>
</comment>
<comment type="activity regulation">
    <text>Alternates between an inactive form bound to GDP and an active form bound to GTP. Activated by a guanine nucleotide-exchange factor (GEF) and inactivated by a GTPase-activating protein (GAP).</text>
</comment>
<comment type="subcellular location">
    <subcellularLocation>
        <location evidence="4">Cell membrane</location>
        <topology evidence="4">Lipid-anchor</topology>
        <orientation evidence="4">Cytoplasmic side</orientation>
    </subcellularLocation>
</comment>
<comment type="similarity">
    <text evidence="4">Belongs to the small GTPase superfamily. Ras family.</text>
</comment>
<organism>
    <name type="scientific">Lentinula edodes</name>
    <name type="common">Shiitake mushroom</name>
    <name type="synonym">Lentinus edodes</name>
    <dbReference type="NCBI Taxonomy" id="5353"/>
    <lineage>
        <taxon>Eukaryota</taxon>
        <taxon>Fungi</taxon>
        <taxon>Dikarya</taxon>
        <taxon>Basidiomycota</taxon>
        <taxon>Agaricomycotina</taxon>
        <taxon>Agaricomycetes</taxon>
        <taxon>Agaricomycetidae</taxon>
        <taxon>Agaricales</taxon>
        <taxon>Marasmiineae</taxon>
        <taxon>Omphalotaceae</taxon>
        <taxon>Lentinula</taxon>
    </lineage>
</organism>
<sequence length="217" mass="24007">MAGRTTFLREYKLVVVGGGGVGKSALTIQFIQSHFVDEYDPTIEDSYRKQCVIDDEVALLDVLDTAGQEEYGAMREQYMRTGEGFLLVYSITSRNSFEEISTFHQQILRVKDQDTFPVVVVANKCDLEYERQVGMNEGRDLARHFGCKFVETSAKVRINVDQAFQDLVREIRKYNKEQQTTGRMMTGGGGGGPPGTYAGKDPNDEGAGGCCGGCVVL</sequence>
<reference key="1">
    <citation type="journal article" date="1991" name="Gene">
        <title>Cloning, sequence analysis and transcriptional expression of a ras gene of the edible basidiomycete Lentinus edodes.</title>
        <authorList>
            <person name="Hori K."/>
            <person name="Kajiwara S."/>
            <person name="Saito T."/>
            <person name="Miyazawa H."/>
            <person name="Katayose Y."/>
            <person name="Shishido K."/>
        </authorList>
    </citation>
    <scope>NUCLEOTIDE SEQUENCE [GENOMIC DNA]</scope>
</reference>
<dbReference type="EC" id="3.6.5.2" evidence="2"/>
<dbReference type="EMBL" id="D00742">
    <property type="protein sequence ID" value="BAA00642.1"/>
    <property type="molecule type" value="Genomic_DNA"/>
</dbReference>
<dbReference type="PIR" id="JS0619">
    <property type="entry name" value="TVWYRS"/>
</dbReference>
<dbReference type="RefSeq" id="XP_046084531.1">
    <property type="nucleotide sequence ID" value="XM_046230157.1"/>
</dbReference>
<dbReference type="SMR" id="P28775"/>
<dbReference type="GeneID" id="70260524"/>
<dbReference type="OrthoDB" id="5976022at2759"/>
<dbReference type="GO" id="GO:0005886">
    <property type="term" value="C:plasma membrane"/>
    <property type="evidence" value="ECO:0007669"/>
    <property type="project" value="UniProtKB-SubCell"/>
</dbReference>
<dbReference type="GO" id="GO:0003925">
    <property type="term" value="F:G protein activity"/>
    <property type="evidence" value="ECO:0007669"/>
    <property type="project" value="UniProtKB-EC"/>
</dbReference>
<dbReference type="GO" id="GO:0005525">
    <property type="term" value="F:GTP binding"/>
    <property type="evidence" value="ECO:0007669"/>
    <property type="project" value="UniProtKB-KW"/>
</dbReference>
<dbReference type="GO" id="GO:0007165">
    <property type="term" value="P:signal transduction"/>
    <property type="evidence" value="ECO:0007669"/>
    <property type="project" value="InterPro"/>
</dbReference>
<dbReference type="FunFam" id="3.40.50.300:FF:000080">
    <property type="entry name" value="Ras-like GTPase Ras1"/>
    <property type="match status" value="1"/>
</dbReference>
<dbReference type="Gene3D" id="3.40.50.300">
    <property type="entry name" value="P-loop containing nucleotide triphosphate hydrolases"/>
    <property type="match status" value="1"/>
</dbReference>
<dbReference type="InterPro" id="IPR027417">
    <property type="entry name" value="P-loop_NTPase"/>
</dbReference>
<dbReference type="InterPro" id="IPR005225">
    <property type="entry name" value="Small_GTP-bd"/>
</dbReference>
<dbReference type="InterPro" id="IPR001806">
    <property type="entry name" value="Small_GTPase"/>
</dbReference>
<dbReference type="InterPro" id="IPR020849">
    <property type="entry name" value="Small_GTPase_Ras-type"/>
</dbReference>
<dbReference type="NCBIfam" id="TIGR00231">
    <property type="entry name" value="small_GTP"/>
    <property type="match status" value="1"/>
</dbReference>
<dbReference type="PANTHER" id="PTHR24070">
    <property type="entry name" value="RAS, DI-RAS, AND RHEB FAMILY MEMBERS OF SMALL GTPASE SUPERFAMILY"/>
    <property type="match status" value="1"/>
</dbReference>
<dbReference type="Pfam" id="PF00071">
    <property type="entry name" value="Ras"/>
    <property type="match status" value="1"/>
</dbReference>
<dbReference type="PRINTS" id="PR00449">
    <property type="entry name" value="RASTRNSFRMNG"/>
</dbReference>
<dbReference type="SMART" id="SM00175">
    <property type="entry name" value="RAB"/>
    <property type="match status" value="1"/>
</dbReference>
<dbReference type="SMART" id="SM00176">
    <property type="entry name" value="RAN"/>
    <property type="match status" value="1"/>
</dbReference>
<dbReference type="SMART" id="SM00173">
    <property type="entry name" value="RAS"/>
    <property type="match status" value="1"/>
</dbReference>
<dbReference type="SMART" id="SM00174">
    <property type="entry name" value="RHO"/>
    <property type="match status" value="1"/>
</dbReference>
<dbReference type="SUPFAM" id="SSF52540">
    <property type="entry name" value="P-loop containing nucleoside triphosphate hydrolases"/>
    <property type="match status" value="1"/>
</dbReference>
<dbReference type="PROSITE" id="PS51421">
    <property type="entry name" value="RAS"/>
    <property type="match status" value="1"/>
</dbReference>